<reference key="1">
    <citation type="journal article" date="1987" name="Biochemistry">
        <title>Ovomucoid third domains from 100 avian species: isolation, sequences, and hypervariability of enzyme-inhibitor contact residues.</title>
        <authorList>
            <person name="Laskowski M. Jr."/>
            <person name="Kato I."/>
            <person name="Ardelt W."/>
            <person name="Cook J."/>
            <person name="Denton A."/>
            <person name="Empie M.W."/>
            <person name="Kohr W.J."/>
            <person name="Park S.J."/>
            <person name="Parks K."/>
            <person name="Schatzley B.L."/>
            <person name="Schoenberger O.L."/>
            <person name="Tashiro M."/>
            <person name="Vichot G."/>
            <person name="Whatley H.E."/>
            <person name="Wieczorek A."/>
            <person name="Wieczorek M."/>
        </authorList>
    </citation>
    <scope>PROTEIN SEQUENCE</scope>
</reference>
<name>IOVO_GEOCA</name>
<sequence length="54" mass="5767">IASVNCSDYPKPVCSLLYMPLCGSDNKTYGNKCNFCNAVADSNGTLTLSHFGKC</sequence>
<dbReference type="PIR" id="H31444">
    <property type="entry name" value="H31444"/>
</dbReference>
<dbReference type="SMR" id="P05615"/>
<dbReference type="GO" id="GO:0005576">
    <property type="term" value="C:extracellular region"/>
    <property type="evidence" value="ECO:0007669"/>
    <property type="project" value="UniProtKB-SubCell"/>
</dbReference>
<dbReference type="GO" id="GO:0004867">
    <property type="term" value="F:serine-type endopeptidase inhibitor activity"/>
    <property type="evidence" value="ECO:0007669"/>
    <property type="project" value="UniProtKB-KW"/>
</dbReference>
<dbReference type="CDD" id="cd00104">
    <property type="entry name" value="KAZAL_FS"/>
    <property type="match status" value="1"/>
</dbReference>
<dbReference type="FunFam" id="3.30.60.30:FF:000037">
    <property type="entry name" value="Ovomucoid"/>
    <property type="match status" value="1"/>
</dbReference>
<dbReference type="Gene3D" id="3.30.60.30">
    <property type="match status" value="1"/>
</dbReference>
<dbReference type="InterPro" id="IPR050159">
    <property type="entry name" value="Kazal-type_SerProtInhib"/>
</dbReference>
<dbReference type="InterPro" id="IPR002350">
    <property type="entry name" value="Kazal_dom"/>
</dbReference>
<dbReference type="InterPro" id="IPR036058">
    <property type="entry name" value="Kazal_dom_sf"/>
</dbReference>
<dbReference type="PANTHER" id="PTHR47499:SF1">
    <property type="entry name" value="SERINE PROTEASE INHIBITOR KAZAL-TYPE 7"/>
    <property type="match status" value="1"/>
</dbReference>
<dbReference type="PANTHER" id="PTHR47499">
    <property type="entry name" value="SERINE PROTEASE INHIBITOR KAZAL-TYPE 7 SPINK7"/>
    <property type="match status" value="1"/>
</dbReference>
<dbReference type="Pfam" id="PF00050">
    <property type="entry name" value="Kazal_1"/>
    <property type="match status" value="1"/>
</dbReference>
<dbReference type="SMART" id="SM00280">
    <property type="entry name" value="KAZAL"/>
    <property type="match status" value="1"/>
</dbReference>
<dbReference type="SUPFAM" id="SSF100895">
    <property type="entry name" value="Kazal-type serine protease inhibitors"/>
    <property type="match status" value="1"/>
</dbReference>
<dbReference type="PROSITE" id="PS00282">
    <property type="entry name" value="KAZAL_1"/>
    <property type="match status" value="1"/>
</dbReference>
<dbReference type="PROSITE" id="PS51465">
    <property type="entry name" value="KAZAL_2"/>
    <property type="match status" value="1"/>
</dbReference>
<comment type="subcellular location">
    <subcellularLocation>
        <location>Secreted</location>
    </subcellularLocation>
</comment>
<comment type="domain">
    <text>Avian ovomucoid consists of three homologous, tandem Kazal family inhibitory domains.</text>
</comment>
<feature type="chain" id="PRO_0000073117" description="Ovomucoid">
    <location>
        <begin position="1" status="less than"/>
        <end position="54" status="greater than"/>
    </location>
</feature>
<feature type="domain" description="Kazal-like" evidence="1">
    <location>
        <begin position="4"/>
        <end position="54"/>
    </location>
</feature>
<feature type="site" description="Reactive bond 3">
    <location>
        <begin position="16"/>
        <end position="17"/>
    </location>
</feature>
<feature type="glycosylation site" description="N-linked (GlcNAc...) asparagine">
    <location>
        <position position="43"/>
    </location>
</feature>
<feature type="disulfide bond">
    <location>
        <begin position="6"/>
        <end position="36"/>
    </location>
</feature>
<feature type="disulfide bond">
    <location>
        <begin position="14"/>
        <end position="33"/>
    </location>
</feature>
<feature type="disulfide bond">
    <location>
        <begin position="22"/>
        <end position="54"/>
    </location>
</feature>
<feature type="non-terminal residue">
    <location>
        <position position="1"/>
    </location>
</feature>
<feature type="non-terminal residue">
    <location>
        <position position="54"/>
    </location>
</feature>
<protein>
    <recommendedName>
        <fullName>Ovomucoid</fullName>
    </recommendedName>
</protein>
<organism>
    <name type="scientific">Geococcyx californianus</name>
    <name type="common">Greater roadrunner</name>
    <name type="synonym">Saurothera californiana</name>
    <dbReference type="NCBI Taxonomy" id="8947"/>
    <lineage>
        <taxon>Eukaryota</taxon>
        <taxon>Metazoa</taxon>
        <taxon>Chordata</taxon>
        <taxon>Craniata</taxon>
        <taxon>Vertebrata</taxon>
        <taxon>Euteleostomi</taxon>
        <taxon>Archelosauria</taxon>
        <taxon>Archosauria</taxon>
        <taxon>Dinosauria</taxon>
        <taxon>Saurischia</taxon>
        <taxon>Theropoda</taxon>
        <taxon>Coelurosauria</taxon>
        <taxon>Aves</taxon>
        <taxon>Neognathae</taxon>
        <taxon>Neoaves</taxon>
        <taxon>Otidimorphae</taxon>
        <taxon>Cuculiformes</taxon>
        <taxon>Neomorphidae</taxon>
        <taxon>Geococcyx</taxon>
    </lineage>
</organism>
<evidence type="ECO:0000255" key="1">
    <source>
        <dbReference type="PROSITE-ProRule" id="PRU00798"/>
    </source>
</evidence>
<keyword id="KW-0903">Direct protein sequencing</keyword>
<keyword id="KW-1015">Disulfide bond</keyword>
<keyword id="KW-0325">Glycoprotein</keyword>
<keyword id="KW-0646">Protease inhibitor</keyword>
<keyword id="KW-0677">Repeat</keyword>
<keyword id="KW-0964">Secreted</keyword>
<keyword id="KW-0722">Serine protease inhibitor</keyword>
<accession>P05615</accession>
<proteinExistence type="evidence at protein level"/>